<gene>
    <name evidence="1" type="primary">bamA</name>
    <name type="synonym">yaeT</name>
    <name type="synonym">yzzN</name>
    <name type="synonym">yzzY</name>
    <name type="ordered locus">b0177</name>
    <name type="ordered locus">JW0172</name>
</gene>
<reference key="1">
    <citation type="journal article" date="2001" name="J. Biol. Chem.">
        <title>Characterization of the Escherichia coli sigma E regulon.</title>
        <authorList>
            <person name="Dartigalongue C."/>
            <person name="Missiakas D."/>
            <person name="Raina S."/>
        </authorList>
    </citation>
    <scope>NUCLEOTIDE SEQUENCE [GENOMIC DNA]</scope>
    <source>
        <strain>K12 / MC4100 / ATCC 35695 / DSM 6574</strain>
    </source>
</reference>
<reference key="2">
    <citation type="submission" date="2001-05" db="EMBL/GenBank/DDBJ databases">
        <authorList>
            <person name="Allison H.E."/>
            <person name="Sergeant M.J."/>
            <person name="Cookson S.S."/>
            <person name="Yaxian Y."/>
            <person name="James C.E."/>
            <person name="Sharp R.J."/>
            <person name="Saunders J.R."/>
            <person name="McCarthy A.J."/>
        </authorList>
    </citation>
    <scope>NUCLEOTIDE SEQUENCE [GENOMIC DNA]</scope>
    <source>
        <strain>K12 / MC1061 / ATCC 53338 / DSM 7140</strain>
    </source>
</reference>
<reference key="3">
    <citation type="submission" date="1996-02" db="EMBL/GenBank/DDBJ databases">
        <title>Systematic sequencing of the Escherichia coli genome: analysis of the 4.0 - 6.0 min (189,987 - 281,416bp) region.</title>
        <authorList>
            <person name="Takemoto K."/>
            <person name="Mori H."/>
            <person name="Murayama N."/>
            <person name="Kataoka K."/>
            <person name="Yano M."/>
            <person name="Itoh T."/>
            <person name="Yamamoto Y."/>
            <person name="Inokuchi H."/>
            <person name="Miki T."/>
            <person name="Hatada E."/>
            <person name="Fukuda R."/>
            <person name="Ichihara S."/>
            <person name="Mizuno T."/>
            <person name="Makino K."/>
            <person name="Nakata A."/>
            <person name="Yura T."/>
            <person name="Sampei G."/>
            <person name="Mizobuchi K."/>
        </authorList>
    </citation>
    <scope>NUCLEOTIDE SEQUENCE [LARGE SCALE GENOMIC DNA]</scope>
    <source>
        <strain>K12 / W3110 / ATCC 27325 / DSM 5911</strain>
    </source>
</reference>
<reference key="4">
    <citation type="submission" date="1997-01" db="EMBL/GenBank/DDBJ databases">
        <title>Sequence of minutes 4-25 of Escherichia coli.</title>
        <authorList>
            <person name="Chung E."/>
            <person name="Allen E."/>
            <person name="Araujo R."/>
            <person name="Aparicio A.M."/>
            <person name="Davis K."/>
            <person name="Duncan M."/>
            <person name="Federspiel N."/>
            <person name="Hyman R."/>
            <person name="Kalman S."/>
            <person name="Komp C."/>
            <person name="Kurdi O."/>
            <person name="Lew H."/>
            <person name="Lin D."/>
            <person name="Namath A."/>
            <person name="Oefner P."/>
            <person name="Roberts D."/>
            <person name="Schramm S."/>
            <person name="Davis R.W."/>
        </authorList>
    </citation>
    <scope>NUCLEOTIDE SEQUENCE [LARGE SCALE GENOMIC DNA]</scope>
    <source>
        <strain>K12 / MG1655 / ATCC 47076</strain>
    </source>
</reference>
<reference key="5">
    <citation type="journal article" date="1997" name="Science">
        <title>The complete genome sequence of Escherichia coli K-12.</title>
        <authorList>
            <person name="Blattner F.R."/>
            <person name="Plunkett G. III"/>
            <person name="Bloch C.A."/>
            <person name="Perna N.T."/>
            <person name="Burland V."/>
            <person name="Riley M."/>
            <person name="Collado-Vides J."/>
            <person name="Glasner J.D."/>
            <person name="Rode C.K."/>
            <person name="Mayhew G.F."/>
            <person name="Gregor J."/>
            <person name="Davis N.W."/>
            <person name="Kirkpatrick H.A."/>
            <person name="Goeden M.A."/>
            <person name="Rose D.J."/>
            <person name="Mau B."/>
            <person name="Shao Y."/>
        </authorList>
    </citation>
    <scope>NUCLEOTIDE SEQUENCE [LARGE SCALE GENOMIC DNA]</scope>
    <source>
        <strain>K12 / MG1655 / ATCC 47076</strain>
    </source>
</reference>
<reference key="6">
    <citation type="journal article" date="2006" name="Mol. Syst. Biol.">
        <title>Highly accurate genome sequences of Escherichia coli K-12 strains MG1655 and W3110.</title>
        <authorList>
            <person name="Hayashi K."/>
            <person name="Morooka N."/>
            <person name="Yamamoto Y."/>
            <person name="Fujita K."/>
            <person name="Isono K."/>
            <person name="Choi S."/>
            <person name="Ohtsubo E."/>
            <person name="Baba T."/>
            <person name="Wanner B.L."/>
            <person name="Mori H."/>
            <person name="Horiuchi T."/>
        </authorList>
    </citation>
    <scope>NUCLEOTIDE SEQUENCE [LARGE SCALE GENOMIC DNA]</scope>
    <scope>SEQUENCE REVISION</scope>
    <source>
        <strain>K12 / W3110 / ATCC 27325 / DSM 5911</strain>
    </source>
</reference>
<reference key="7">
    <citation type="journal article" date="1997" name="Electrophoresis">
        <title>Comparing the predicted and observed properties of proteins encoded in the genome of Escherichia coli K-12.</title>
        <authorList>
            <person name="Link A.J."/>
            <person name="Robison K."/>
            <person name="Church G.M."/>
        </authorList>
    </citation>
    <scope>PROTEIN SEQUENCE OF 21-32 AND 351-362</scope>
    <source>
        <strain>K12 / EMG2</strain>
    </source>
</reference>
<reference key="8">
    <citation type="journal article" date="2003" name="Trends Biochem. Sci.">
        <title>POTRA: a conserved domain in the FtsQ family and a class of beta-barrel outer membrane proteins.</title>
        <authorList>
            <person name="Sanchez-Pulido L."/>
            <person name="Devos D."/>
            <person name="Genevrois S."/>
            <person name="Vicente M."/>
            <person name="Valencia A."/>
        </authorList>
    </citation>
    <scope>POTRA DOMAIN</scope>
</reference>
<reference key="9">
    <citation type="journal article" date="2005" name="Cell">
        <title>Identification of a multicomponent complex required for outer membrane biogenesis in Escherichia coli.</title>
        <authorList>
            <person name="Wu T."/>
            <person name="Malinverni J."/>
            <person name="Ruiz N."/>
            <person name="Kim S."/>
            <person name="Silhavy T.J."/>
            <person name="Kahne D."/>
        </authorList>
    </citation>
    <scope>SUBUNIT</scope>
    <scope>DISRUPTION PHENOTYPE</scope>
    <source>
        <strain>K12</strain>
    </source>
</reference>
<reference key="10">
    <citation type="journal article" date="2005" name="J. Biol. Chem.">
        <title>Loss of outer membrane proteins without inhibition of lipid export in an Escherichia coli YaeT mutant.</title>
        <authorList>
            <person name="Doerrler W.T."/>
            <person name="Raetz C.R.H."/>
        </authorList>
    </citation>
    <scope>FUNCTION</scope>
</reference>
<reference key="11">
    <citation type="journal article" date="2005" name="J. Biol. Chem.">
        <title>Protein complexes of the Escherichia coli cell envelope.</title>
        <authorList>
            <person name="Stenberg F."/>
            <person name="Chovanec P."/>
            <person name="Maslen S.L."/>
            <person name="Robinson C.V."/>
            <person name="Ilag L."/>
            <person name="von Heijne G."/>
            <person name="Daley D.O."/>
        </authorList>
    </citation>
    <scope>SUBUNIT</scope>
    <scope>SUBCELLULAR LOCATION</scope>
    <source>
        <strain>BL21-DE3</strain>
    </source>
</reference>
<reference key="12">
    <citation type="journal article" date="2005" name="Mol. Microbiol.">
        <title>YaeT (Omp85) affects the assembly of lipid-dependent and lipid-independent outer membrane proteins of Escherichia coli.</title>
        <authorList>
            <person name="Werner J."/>
            <person name="Misra R."/>
        </authorList>
    </citation>
    <scope>FUNCTION</scope>
    <scope>DISRUPTION PHENOTYPE</scope>
</reference>
<reference key="13">
    <citation type="journal article" date="2006" name="Mol. Microbiol.">
        <title>YfiO stabilizes the YaeT complex and is essential for outer membrane protein assembly in Escherichia coli.</title>
        <authorList>
            <person name="Malinverni J.C."/>
            <person name="Werner J."/>
            <person name="Kim S."/>
            <person name="Sklar J.G."/>
            <person name="Kahne D."/>
            <person name="Misra R."/>
            <person name="Silhavy T.J."/>
        </authorList>
    </citation>
    <scope>FUNCTION</scope>
    <scope>SUBUNIT</scope>
    <scope>INTERACTION WITH BAMB AND BAMD</scope>
    <source>
        <strain>K12</strain>
    </source>
</reference>
<reference key="14">
    <citation type="journal article" date="2007" name="Proc. Natl. Acad. Sci. U.S.A.">
        <title>Lipoprotein SmpA is a component of the YaeT complex that assembles outer membrane proteins in Escherichia coli.</title>
        <authorList>
            <person name="Sklar J.G."/>
            <person name="Wu T."/>
            <person name="Gronenberg L.S."/>
            <person name="Malinverni J.C."/>
            <person name="Kahne D."/>
            <person name="Silhavy T.J."/>
        </authorList>
    </citation>
    <scope>SUBUNIT</scope>
    <source>
        <strain>K12</strain>
    </source>
</reference>
<reference key="15">
    <citation type="journal article" date="2008" name="Mol. Microbiol.">
        <title>Contact-dependent growth inhibition requires the essential outer membrane protein BamA (YaeT) as the receptor and the inner membrane transport protein AcrB.</title>
        <authorList>
            <person name="Aoki S.K."/>
            <person name="Malinverni J.C."/>
            <person name="Jacoby K."/>
            <person name="Thomas B."/>
            <person name="Pamma R."/>
            <person name="Trinh B.N."/>
            <person name="Remers S."/>
            <person name="Webb J."/>
            <person name="Braaten B.A."/>
            <person name="Silhavy T.J."/>
            <person name="Low D.A."/>
        </authorList>
    </citation>
    <scope>FUNCTION IN CDI (MICROBIAL INFECTION)</scope>
    <scope>DISRUPTION PHENOTYPE</scope>
    <source>
        <strain>K12 / MC1061</strain>
    </source>
</reference>
<reference key="16">
    <citation type="journal article" date="2010" name="Science">
        <title>Reconstitution of outer membrane protein assembly from purified components.</title>
        <authorList>
            <person name="Hagan C.L."/>
            <person name="Kim S."/>
            <person name="Kahne D."/>
        </authorList>
    </citation>
    <scope>FUNCTION</scope>
    <scope>SUBUNIT</scope>
</reference>
<reference key="17">
    <citation type="journal article" date="2011" name="Biochemistry">
        <title>The reconstituted Escherichia coli Bam complex catalyzes multiple rounds of beta-barrel assembly.</title>
        <authorList>
            <person name="Hagan C.L."/>
            <person name="Kahne D."/>
        </authorList>
    </citation>
    <scope>FUNCTION</scope>
    <scope>SUBUNIT</scope>
</reference>
<reference key="18">
    <citation type="journal article" date="2011" name="J. Biol. Chem.">
        <title>Structural basis of outer membrane protein biogenesis in bacteria.</title>
        <authorList>
            <person name="Albrecht R."/>
            <person name="Zeth K."/>
        </authorList>
    </citation>
    <scope>INTERACTION WITH BAMB AND BAMD</scope>
</reference>
<reference key="19">
    <citation type="journal article" date="2013" name="PLoS ONE">
        <title>Delivery of CdiA nuclease toxins into target cells during contact-dependent growth inhibition.</title>
        <authorList>
            <person name="Webb J.S."/>
            <person name="Nikolakakis K.C."/>
            <person name="Willett J.L."/>
            <person name="Aoki S.K."/>
            <person name="Hayes C.S."/>
            <person name="Low D.A."/>
        </authorList>
    </citation>
    <scope>FUNCTION IN CDI (MICROBIAL INFECTION)</scope>
    <scope>DISRUPTION PHENOTYPE</scope>
    <source>
        <strain>K12 / MC4100</strain>
    </source>
</reference>
<reference key="20">
    <citation type="journal article" date="2013" name="MBio">
        <title>Receptor polymorphism restricts contact-dependent growth inhibition to members of the same species.</title>
        <authorList>
            <person name="Ruhe Z.C."/>
            <person name="Wallace A.B."/>
            <person name="Low D.A."/>
            <person name="Hayes C.S."/>
        </authorList>
    </citation>
    <scope>FUNCTION IN CDI (MICROBIAL INFECTION)</scope>
    <scope>STRAIN SPECIFICITY</scope>
    <scope>SUBCELLULAR LOCATION</scope>
    <scope>TOPOLOGY</scope>
    <scope>MUTAGENESIS OF 554-GLU--ASP-562; 556-PRO--SER-564; 675-PHE--SER-702; 677-HIS--ASP-685 AND 754-TYR-SER-755</scope>
</reference>
<reference evidence="28 29" key="21">
    <citation type="journal article" date="2007" name="Science">
        <title>Structure and function of an essential component of the outer membrane protein assembly machine.</title>
        <authorList>
            <person name="Kim S."/>
            <person name="Malinverni J.C."/>
            <person name="Sliz P."/>
            <person name="Silhavy T.J."/>
            <person name="Harrison S.C."/>
            <person name="Kahne D."/>
        </authorList>
    </citation>
    <scope>X-RAY CRYSTALLOGRAPHY (2.20 ANGSTROMS) OF 21-351</scope>
    <scope>DOMAIN</scope>
</reference>
<reference evidence="30" key="22">
    <citation type="journal article" date="2008" name="Mol. Microbiol.">
        <title>Fold and function of polypeptide transport-associated domains responsible for delivering unfolded proteins to membranes.</title>
        <authorList>
            <person name="Knowles T.J."/>
            <person name="Jeeves M."/>
            <person name="Bobat S."/>
            <person name="Dancea F."/>
            <person name="McClelland D."/>
            <person name="Palmer T."/>
            <person name="Overduin M."/>
            <person name="Henderson I.R."/>
        </authorList>
    </citation>
    <scope>STRUCTURE BY NMR OF 21-184</scope>
    <scope>DOMAIN</scope>
</reference>
<reference evidence="31" key="23">
    <citation type="journal article" date="2008" name="Structure">
        <title>Crystal structure of YaeT: conformational flexibility and substrate recognition.</title>
        <authorList>
            <person name="Gatzeva-Topalova P.Z."/>
            <person name="Walton T.A."/>
            <person name="Sousa M.C."/>
        </authorList>
    </citation>
    <scope>X-RAY CRYSTALLOGRAPHY (3.30 ANGSTROMS) OF 21-410</scope>
    <scope>DOMAIN</scope>
</reference>
<reference evidence="32" key="24">
    <citation type="journal article" date="2011" name="Acta Crystallogr. F">
        <title>High-resolution structure of a new crystal form of BamA POTRA4-5 from Escherichia coli.</title>
        <authorList>
            <person name="Zhang H."/>
            <person name="Gao Z.Q."/>
            <person name="Hou H.F."/>
            <person name="Xu J.H."/>
            <person name="Li L.F."/>
            <person name="Su X.D."/>
            <person name="Dong Y.H."/>
        </authorList>
    </citation>
    <scope>X-RAY CRYSTALLOGRAPHY (1.50 ANGSTROMS) OF 266-420</scope>
    <scope>DOMAIN</scope>
</reference>
<reference evidence="33" key="25">
    <citation type="journal article" date="2014" name="Acta Crystallogr. D">
        <title>Structure of BamA, an essential factor in outer membrane protein biogenesis.</title>
        <authorList>
            <person name="Albrecht R."/>
            <person name="Schutz M."/>
            <person name="Oberhettinger P."/>
            <person name="Faulstich M."/>
            <person name="Bermejo I."/>
            <person name="Rudel T."/>
            <person name="Diederichs K."/>
            <person name="Zeth K."/>
        </authorList>
    </citation>
    <scope>X-RAY CRYSTALLOGRAPHY (3.00 ANGSTROMS) OF 347-810 AND 344-810</scope>
    <scope>SUBCELLULAR LOCATION</scope>
    <scope>DOMAIN</scope>
    <scope>TOPOLOGY</scope>
    <source>
        <strain>BL21 (DE3)</strain>
    </source>
</reference>
<reference evidence="34" key="26">
    <citation type="journal article" date="2014" name="FASEB J.">
        <title>Structural and functional analysis of the beta-barrel domain of BamA from Escherichia coli.</title>
        <authorList>
            <person name="Ni D."/>
            <person name="Wang Y."/>
            <person name="Yang X."/>
            <person name="Zhou H."/>
            <person name="Hou X."/>
            <person name="Cao B."/>
            <person name="Lu Z."/>
            <person name="Zhao X."/>
            <person name="Yang K."/>
            <person name="Huang Y."/>
        </authorList>
    </citation>
    <scope>X-RAY CRYSTALLOGRAPHY (2.60 ANGSTROMS) OF 427-810</scope>
    <scope>SUBCELLULAR LOCATION</scope>
    <scope>DOMAIN</scope>
    <scope>TOPOLOGY</scope>
    <scope>MUTAGENESIS OF GLU-435; ASP-464; ASP-500; ARG-547; ARG-661; 673-VAL--SER-702; ASP-740 AND GLU-800</scope>
    <source>
        <strain>K12 / MG1655 / ATCC 47076</strain>
    </source>
</reference>
<reference evidence="39" key="27">
    <citation type="journal article" date="2016" name="Nat. Commun.">
        <title>Lateral opening in the intact beta-barrel assembly machinery captured by cryo-EM.</title>
        <authorList>
            <person name="Iadanza M.G."/>
            <person name="Higgins A.J."/>
            <person name="Schiffrin B."/>
            <person name="Calabrese A.N."/>
            <person name="Brockwell D.J."/>
            <person name="Ashcroft A.E."/>
            <person name="Radford S.E."/>
            <person name="Ranson N.A."/>
        </authorList>
    </citation>
    <scope>STRUCTURE BY ELECTRON MICROSCOPY (4.90 ANGSTROMS) OF 24-806 IN LATERAL OPEN BAM COMPLEX</scope>
    <scope>FUNCTION</scope>
    <scope>REACTION MECHANISM</scope>
    <scope>SUBUNIT</scope>
    <scope>MASS SPECTROMETRY</scope>
    <scope>MUTAGENESIS OF ILE-430 AND LYS-808</scope>
</reference>
<reference evidence="35" key="28">
    <citation type="journal article" date="2016" name="Nat. Struct. Mol. Biol.">
        <title>Structure of the BAM complex and its implications for biogenesis of outer-membrane proteins.</title>
        <authorList>
            <person name="Han L."/>
            <person name="Zheng J."/>
            <person name="Wang Y."/>
            <person name="Yang X."/>
            <person name="Liu Y."/>
            <person name="Sun C."/>
            <person name="Cao B."/>
            <person name="Zhou H."/>
            <person name="Ni D."/>
            <person name="Lou J."/>
            <person name="Zhao Y."/>
            <person name="Huang Y."/>
        </authorList>
    </citation>
    <scope>X-RAY CRYSTALLOGRAPHY (3.56 ANGSTROMS) OF 22-810 IN LATERAL CLOSED BAM COMPLEX</scope>
    <scope>SUBUNIT</scope>
    <scope>SUBCELLULAR LOCATION</scope>
    <scope>MUTAGENESIS OF ASN-181; LYS-251; ASN-259 AND GLY-429</scope>
    <source>
        <strain>K12 / MG1655 / ATCC 47076</strain>
    </source>
</reference>
<reference evidence="36 37" key="29">
    <citation type="journal article" date="2016" name="Nature">
        <title>Structural basis of outer membrane protein insertion by the BAM complex.</title>
        <authorList>
            <person name="Gu Y."/>
            <person name="Li H."/>
            <person name="Dong H."/>
            <person name="Zeng Y."/>
            <person name="Zhang Z."/>
            <person name="Paterson N.G."/>
            <person name="Stansfeld P.J."/>
            <person name="Wang Z."/>
            <person name="Zhang Y."/>
            <person name="Wang W."/>
            <person name="Dong C."/>
        </authorList>
    </citation>
    <scope>X-RAY CRYSTALLOGRAPHY (2.90 ANGSTROMS) IN LATERAL CLOSED BAM COMPLEX AND LATERAL OPEN BAMACDE SUBCOMPLEX</scope>
    <scope>REACTION MECHANISM</scope>
    <scope>SUBUNIT</scope>
    <scope>SUBCELLULAR LOCATION</scope>
    <scope>MUTAGENESIS OF 351-LYS--LYS-353; LYS-351; ARG-366; GLU-373; GLY-393; 415-VAL--LYS-419; 415-VAL--LYS-417; 417-LYS--LYS-419; GLU-435; GLY-584 AND SER-658</scope>
</reference>
<reference evidence="38" key="30">
    <citation type="journal article" date="2016" name="Science">
        <title>The structure of the beta-barrel assembly machinery complex.</title>
        <authorList>
            <person name="Bakelar J."/>
            <person name="Buchanan S.K."/>
            <person name="Noinaj N."/>
        </authorList>
    </citation>
    <scope>X-RAY CRYSTALLOGRAPHY (3.39 ANGSTROMS) OF 21-810 OF LATERAL OPEN BAMACDE SUBCOMPLEX</scope>
    <scope>SUBUNIT</scope>
</reference>
<feature type="signal peptide" evidence="1 25">
    <location>
        <begin position="1"/>
        <end position="20"/>
    </location>
</feature>
<feature type="chain" id="PRO_0000033470" description="Outer membrane protein assembly factor BamA">
    <location>
        <begin position="21"/>
        <end position="810"/>
    </location>
</feature>
<feature type="topological domain" description="Periplasmic" evidence="26">
    <location>
        <begin position="21"/>
        <end position="424"/>
    </location>
</feature>
<feature type="transmembrane region" description="Beta stranded; Name=Strand 1" evidence="20">
    <location>
        <begin position="425"/>
        <end position="433"/>
    </location>
</feature>
<feature type="topological domain" description="Extracellular; loop 1" evidence="26">
    <location>
        <begin position="434"/>
        <end position="435"/>
    </location>
</feature>
<feature type="transmembrane region" description="Beta stranded; Name=Strand 2" evidence="20">
    <location>
        <begin position="436"/>
        <end position="446"/>
    </location>
</feature>
<feature type="topological domain" description="Periplasmic" evidence="26">
    <location>
        <begin position="447"/>
        <end position="454"/>
    </location>
</feature>
<feature type="transmembrane region" description="Beta stranded; Name=Strand 3" evidence="20">
    <location>
        <begin position="455"/>
        <end position="462"/>
    </location>
</feature>
<feature type="topological domain" description="Extracellular; loop 2" evidence="26">
    <location>
        <begin position="463"/>
        <end position="465"/>
    </location>
</feature>
<feature type="transmembrane region" description="Beta stranded; Name=Strand 4" evidence="20">
    <location>
        <begin position="466"/>
        <end position="475"/>
    </location>
</feature>
<feature type="topological domain" description="Periplasmic" evidence="26">
    <location>
        <begin position="476"/>
        <end position="483"/>
    </location>
</feature>
<feature type="transmembrane region" description="Beta stranded; Name=Strand 5" evidence="20">
    <location>
        <begin position="484"/>
        <end position="495"/>
    </location>
</feature>
<feature type="topological domain" description="Extracellular; loop 3" evidence="26">
    <location>
        <begin position="496"/>
        <end position="504"/>
    </location>
</feature>
<feature type="transmembrane region" description="Beta stranded; Name=Strand 6" evidence="20">
    <location>
        <begin position="505"/>
        <end position="506"/>
    </location>
</feature>
<feature type="topological domain" description="Periplasmic" evidence="26">
    <location>
        <begin position="507"/>
        <end position="522"/>
    </location>
</feature>
<feature type="transmembrane region" description="Beta stranded; Name=Strand 7" evidence="20">
    <location>
        <begin position="523"/>
        <end position="535"/>
    </location>
</feature>
<feature type="topological domain" description="Extracellular; loop 4" evidence="18 20">
    <location>
        <begin position="536"/>
        <end position="563"/>
    </location>
</feature>
<feature type="transmembrane region" description="Beta stranded; Name=Strand 8" evidence="20">
    <location>
        <begin position="564"/>
        <end position="577"/>
    </location>
</feature>
<feature type="topological domain" description="Periplasmic" evidence="26">
    <location>
        <begin position="578"/>
        <end position="590"/>
    </location>
</feature>
<feature type="transmembrane region" description="Beta stranded; Name=Strand 9" evidence="20">
    <location>
        <begin position="591"/>
        <end position="600"/>
    </location>
</feature>
<feature type="topological domain" description="Extracellular; loop 5" evidence="26">
    <location>
        <begin position="601"/>
        <end position="608"/>
    </location>
</feature>
<feature type="transmembrane region" description="Beta stranded; Name=Strand 10" evidence="20">
    <location>
        <begin position="609"/>
        <end position="619"/>
    </location>
</feature>
<feature type="topological domain" description="Periplasmic" evidence="26">
    <location>
        <begin position="620"/>
        <end position="628"/>
    </location>
</feature>
<feature type="transmembrane region" description="Beta stranded; Name=Strand 11" evidence="20">
    <location>
        <begin position="629"/>
        <end position="639"/>
    </location>
</feature>
<feature type="topological domain" description="Extracellular; loop 6" evidence="18 20">
    <location>
        <begin position="640"/>
        <end position="708"/>
    </location>
</feature>
<feature type="transmembrane region" description="Beta stranded; Name=Strand 12" evidence="20">
    <location>
        <begin position="709"/>
        <end position="718"/>
    </location>
</feature>
<feature type="topological domain" description="Periplasmic" evidence="26">
    <location>
        <begin position="719"/>
        <end position="732"/>
    </location>
</feature>
<feature type="transmembrane region" description="Beta stranded; Name=Strand 13" evidence="20">
    <location>
        <begin position="733"/>
        <end position="745"/>
    </location>
</feature>
<feature type="topological domain" description="Extracellular; loop 7" evidence="26">
    <location>
        <begin position="746"/>
        <end position="767"/>
    </location>
</feature>
<feature type="transmembrane region" description="Beta stranded; Name=Strand 14" evidence="20">
    <location>
        <begin position="768"/>
        <end position="777"/>
    </location>
</feature>
<feature type="topological domain" description="Periplasmic" evidence="26">
    <location>
        <position position="778"/>
    </location>
</feature>
<feature type="transmembrane region" description="Beta stranded; Name=Strand 15" evidence="20">
    <location>
        <begin position="779"/>
        <end position="789"/>
    </location>
</feature>
<feature type="topological domain" description="Extracellular; loop 8" evidence="26">
    <location>
        <begin position="790"/>
        <end position="803"/>
    </location>
</feature>
<feature type="transmembrane region" description="Beta stranded; Name=Strand 16" evidence="20">
    <location>
        <begin position="804"/>
        <end position="808"/>
    </location>
</feature>
<feature type="domain" description="POTRA 1" evidence="2 27">
    <location>
        <begin position="24"/>
        <end position="91"/>
    </location>
</feature>
<feature type="domain" description="POTRA 2" evidence="2 27">
    <location>
        <begin position="92"/>
        <end position="172"/>
    </location>
</feature>
<feature type="domain" description="POTRA 3" evidence="2 27">
    <location>
        <begin position="175"/>
        <end position="263"/>
    </location>
</feature>
<feature type="domain" description="POTRA 4" evidence="2 27">
    <location>
        <begin position="266"/>
        <end position="344"/>
    </location>
</feature>
<feature type="domain" description="POTRA 5" evidence="2 27">
    <location>
        <begin position="347"/>
        <end position="421"/>
    </location>
</feature>
<feature type="mutagenesis site" description="Lethal, protein does not accumulate." evidence="22">
    <original>N</original>
    <variation>A</variation>
    <location>
        <position position="181"/>
    </location>
</feature>
<feature type="mutagenesis site" description="Lethal, protein does not accumulate." evidence="22">
    <original>K</original>
    <variation>A</variation>
    <location>
        <position position="251"/>
    </location>
</feature>
<feature type="mutagenesis site" description="Lethal, protein does not accumulate." evidence="22">
    <original>N</original>
    <variation>A</variation>
    <location>
        <position position="259"/>
    </location>
</feature>
<feature type="mutagenesis site" description="Lethal, wild-type protein levels." evidence="23">
    <original>KIR</original>
    <variation>PIP</variation>
    <location>
        <begin position="351"/>
        <end position="353"/>
    </location>
</feature>
<feature type="mutagenesis site" description="Reduces cell growth, wild-type protein levels." evidence="23">
    <original>K</original>
    <variation>P</variation>
    <location>
        <position position="351"/>
    </location>
</feature>
<feature type="mutagenesis site" description="Severely impairs cell growth, wild-type protein levels." evidence="23">
    <original>R</original>
    <variation>E</variation>
    <location>
        <position position="366"/>
    </location>
</feature>
<feature type="mutagenesis site" description="Lethal, wild-type protein levels." evidence="22 23">
    <original>E</original>
    <variation>K</variation>
    <location>
        <position position="373"/>
    </location>
</feature>
<feature type="mutagenesis site" description="No effect. Lethal; when associated with C-584, probably locks protein in a single conformation that prevents movement, growth restored by strong reducing agent." evidence="23">
    <original>G</original>
    <variation>C</variation>
    <location>
        <position position="393"/>
    </location>
</feature>
<feature type="mutagenesis site" description="Lethal, wild-type protein levels." evidence="23">
    <original>VYKVK</original>
    <variation>PYKVP</variation>
    <location>
        <begin position="415"/>
        <end position="419"/>
    </location>
</feature>
<feature type="mutagenesis site" description="Lethal, wild-type protein levels." evidence="23">
    <original>VYK</original>
    <variation>PYP</variation>
    <location>
        <begin position="415"/>
        <end position="417"/>
    </location>
</feature>
<feature type="mutagenesis site" description="Lethal, wild-type protein levels." evidence="23">
    <original>KVK</original>
    <variation>PVP</variation>
    <location>
        <begin position="417"/>
        <end position="419"/>
    </location>
</feature>
<feature type="mutagenesis site" description="Lethal, wild-type protein levels." evidence="22">
    <original>G</original>
    <variation>P</variation>
    <location>
        <position position="429"/>
    </location>
</feature>
<feature type="mutagenesis site" description="Reduced folding of OmpT; when associated with C-808, traps protein in lateral closed conformation, growth restored by reducing agent." evidence="24">
    <original>I</original>
    <variation>C</variation>
    <location>
        <position position="430"/>
    </location>
</feature>
<feature type="mutagenesis site" description="No effect. Lethal; when associated with C-658 or C-665, probably locks protein in a single conformation that prevents movement, growth restored by strong reducing agent." evidence="23">
    <original>E</original>
    <variation>C</variation>
    <location>
        <position position="435"/>
    </location>
</feature>
<feature type="mutagenesis site" description="Very minor growth defect. Lethal; when associated with L-800." evidence="19">
    <original>E</original>
    <variation>L</variation>
    <location>
        <position position="435"/>
    </location>
</feature>
<feature type="mutagenesis site" description="Very minor growth defect." evidence="19">
    <original>D</original>
    <variation>L</variation>
    <location>
        <position position="464"/>
    </location>
</feature>
<feature type="mutagenesis site" description="Very minor growth defect." evidence="19">
    <original>D</original>
    <variation>L</variation>
    <location>
        <position position="500"/>
    </location>
</feature>
<feature type="mutagenesis site" description="Lethal." evidence="19">
    <original>R</original>
    <variation>A</variation>
    <location>
        <position position="547"/>
    </location>
</feature>
<feature type="mutagenesis site" description="Loop 4 to HA epitope; still susceptible to CdiA-EC93." evidence="18">
    <original>EHPSTSDQD</original>
    <variation>VDYPYDVPDYA</variation>
    <location>
        <begin position="554"/>
        <end position="562"/>
    </location>
</feature>
<feature type="mutagenesis site" description="Delta loop 4; slight increase in resistance to CdiA-EC93, forms aggregates with CdiA-EC93 cells." evidence="18">
    <original>PSTSDQDN</original>
    <variation>G</variation>
    <location>
        <begin position="556"/>
        <end position="563"/>
    </location>
</feature>
<feature type="mutagenesis site" description="No effect. Lethal; when associated with C-393, probably locks protein in a single conformation that prevents movement, growth restored by strong reducing agent." evidence="23">
    <original>G</original>
    <variation>C</variation>
    <location>
        <position position="584"/>
    </location>
</feature>
<feature type="mutagenesis site" description="No effect. Lethal; when associated with C-435, probably locks protein in a single conformation that prevents movement, growth restored by strong reducing agent." evidence="23">
    <original>S</original>
    <variation>C</variation>
    <location>
        <position position="658"/>
    </location>
</feature>
<feature type="mutagenesis site" description="Slow growth on solid and liquid media, less protein accumulates which is more proteinase sensitive." evidence="19">
    <original>R</original>
    <variation>A</variation>
    <location>
        <position position="661"/>
    </location>
</feature>
<feature type="mutagenesis site" description="No effect. Lethal; when associated with C-435, probably locks protein in a single conformation that prevents movement, growth restored by strong reducing agent." evidence="23">
    <original>S</original>
    <variation>C</variation>
    <location>
        <position position="665"/>
    </location>
</feature>
<feature type="mutagenesis site" description="Lethal." evidence="19">
    <location>
        <begin position="673"/>
        <end position="702"/>
    </location>
</feature>
<feature type="mutagenesis site" description="Delta loop 6; fully resistant to CdiA-EC93, does not form aggregates with CdiA-EC93 cells." evidence="18">
    <original>FPHQASNYDPDYDYECATQDGAKDLCK</original>
    <variation>G</variation>
    <location>
        <begin position="675"/>
        <end position="701"/>
    </location>
</feature>
<feature type="mutagenesis site" description="Loop 6 to HA epitope; still susceptible to CdiA-EC93." evidence="18">
    <original>HQASNYDPD</original>
    <variation>VDYPYDVPDYA</variation>
    <location>
        <begin position="677"/>
        <end position="685"/>
    </location>
</feature>
<feature type="mutagenesis site" description="Slow growth on solid and liquid media, less protein accumulates which is more proteinase sensitive." evidence="19">
    <original>D</original>
    <variation>A</variation>
    <location>
        <position position="740"/>
    </location>
</feature>
<feature type="mutagenesis site" description="Loop 7 to HA epitope; fully resistant to CdiA-EC93, does not form aggregates with CdiA-EC93 cells." evidence="18">
    <original>YS</original>
    <variation>VDYPYDVPDYA</variation>
    <location>
        <begin position="754"/>
        <end position="755"/>
    </location>
</feature>
<feature type="mutagenesis site" description="Very minor growth defect. Lethal; when associated with L-435." evidence="19">
    <original>E</original>
    <variation>L</variation>
    <location>
        <position position="800"/>
    </location>
</feature>
<feature type="mutagenesis site" description="Reduced folding of OmpT; when associated with C-430, traps protein in lateral closed conformation, growth restored by reducing agent." evidence="24">
    <original>K</original>
    <variation>C</variation>
    <location>
        <position position="808"/>
    </location>
</feature>
<feature type="sequence conflict" description="In Ref. 2; AAK64508." evidence="26" ref="2">
    <original>E</original>
    <variation>Q</variation>
    <location>
        <position position="115"/>
    </location>
</feature>
<feature type="sequence conflict" description="In Ref. 2; AAK64508." evidence="26" ref="2">
    <original>S</original>
    <variation>I</variation>
    <location>
        <position position="228"/>
    </location>
</feature>
<feature type="sequence conflict" description="In Ref. 2; AAK64508." evidence="26" ref="2">
    <original>K</original>
    <variation>R</variation>
    <location>
        <position position="361"/>
    </location>
</feature>
<feature type="sequence conflict" description="In Ref. 2; AAK64508." evidence="26" ref="2">
    <original>R</original>
    <variation>C</variation>
    <location>
        <position position="632"/>
    </location>
</feature>
<feature type="sequence conflict" description="In Ref. 2; AAK64508." evidence="26" ref="2">
    <original>A</original>
    <variation>T</variation>
    <location>
        <position position="712"/>
    </location>
</feature>
<feature type="strand" evidence="41">
    <location>
        <begin position="28"/>
        <end position="33"/>
    </location>
</feature>
<feature type="strand" evidence="41">
    <location>
        <begin position="35"/>
        <end position="37"/>
    </location>
</feature>
<feature type="helix" evidence="41">
    <location>
        <begin position="39"/>
        <end position="44"/>
    </location>
</feature>
<feature type="strand" evidence="57">
    <location>
        <begin position="50"/>
        <end position="53"/>
    </location>
</feature>
<feature type="helix" evidence="41">
    <location>
        <begin position="56"/>
        <end position="67"/>
    </location>
</feature>
<feature type="turn" evidence="50">
    <location>
        <begin position="68"/>
        <end position="70"/>
    </location>
</feature>
<feature type="strand" evidence="41">
    <location>
        <begin position="72"/>
        <end position="80"/>
    </location>
</feature>
<feature type="strand" evidence="41">
    <location>
        <begin position="83"/>
        <end position="90"/>
    </location>
</feature>
<feature type="strand" evidence="41">
    <location>
        <begin position="93"/>
        <end position="101"/>
    </location>
</feature>
<feature type="strand" evidence="40">
    <location>
        <begin position="103"/>
        <end position="105"/>
    </location>
</feature>
<feature type="helix" evidence="41">
    <location>
        <begin position="107"/>
        <end position="115"/>
    </location>
</feature>
<feature type="turn" evidence="41">
    <location>
        <begin position="116"/>
        <end position="118"/>
    </location>
</feature>
<feature type="strand" evidence="42">
    <location>
        <begin position="121"/>
        <end position="123"/>
    </location>
</feature>
<feature type="helix" evidence="49">
    <location>
        <begin position="127"/>
        <end position="129"/>
    </location>
</feature>
<feature type="helix" evidence="41">
    <location>
        <begin position="130"/>
        <end position="140"/>
    </location>
</feature>
<feature type="helix" evidence="41">
    <location>
        <begin position="141"/>
        <end position="144"/>
    </location>
</feature>
<feature type="strand" evidence="41">
    <location>
        <begin position="146"/>
        <end position="148"/>
    </location>
</feature>
<feature type="strand" evidence="41">
    <location>
        <begin position="150"/>
        <end position="158"/>
    </location>
</feature>
<feature type="turn" evidence="41">
    <location>
        <begin position="159"/>
        <end position="161"/>
    </location>
</feature>
<feature type="strand" evidence="41">
    <location>
        <begin position="162"/>
        <end position="170"/>
    </location>
</feature>
<feature type="strand" evidence="46">
    <location>
        <begin position="176"/>
        <end position="184"/>
    </location>
</feature>
<feature type="strand" evidence="40">
    <location>
        <begin position="186"/>
        <end position="188"/>
    </location>
</feature>
<feature type="helix" evidence="46">
    <location>
        <begin position="190"/>
        <end position="194"/>
    </location>
</feature>
<feature type="helix" evidence="41">
    <location>
        <begin position="195"/>
        <end position="197"/>
    </location>
</feature>
<feature type="turn" evidence="49">
    <location>
        <begin position="205"/>
        <end position="208"/>
    </location>
</feature>
<feature type="turn" evidence="42">
    <location>
        <begin position="210"/>
        <end position="212"/>
    </location>
</feature>
<feature type="helix" evidence="46">
    <location>
        <begin position="216"/>
        <end position="231"/>
    </location>
</feature>
<feature type="turn" evidence="46">
    <location>
        <begin position="232"/>
        <end position="234"/>
    </location>
</feature>
<feature type="strand" evidence="46">
    <location>
        <begin position="239"/>
        <end position="247"/>
    </location>
</feature>
<feature type="strand" evidence="46">
    <location>
        <begin position="251"/>
        <end position="261"/>
    </location>
</feature>
<feature type="strand" evidence="43">
    <location>
        <begin position="267"/>
        <end position="276"/>
    </location>
</feature>
<feature type="turn" evidence="47">
    <location>
        <begin position="278"/>
        <end position="280"/>
    </location>
</feature>
<feature type="helix" evidence="43">
    <location>
        <begin position="281"/>
        <end position="287"/>
    </location>
</feature>
<feature type="strand" evidence="55">
    <location>
        <begin position="292"/>
        <end position="295"/>
    </location>
</feature>
<feature type="helix" evidence="43">
    <location>
        <begin position="298"/>
        <end position="313"/>
    </location>
</feature>
<feature type="turn" evidence="43">
    <location>
        <begin position="314"/>
        <end position="316"/>
    </location>
</feature>
<feature type="strand" evidence="46">
    <location>
        <begin position="317"/>
        <end position="319"/>
    </location>
</feature>
<feature type="strand" evidence="43">
    <location>
        <begin position="321"/>
        <end position="329"/>
    </location>
</feature>
<feature type="turn" evidence="43">
    <location>
        <begin position="330"/>
        <end position="333"/>
    </location>
</feature>
<feature type="strand" evidence="43">
    <location>
        <begin position="334"/>
        <end position="342"/>
    </location>
</feature>
<feature type="strand" evidence="43">
    <location>
        <begin position="348"/>
        <end position="356"/>
    </location>
</feature>
<feature type="strand" evidence="43">
    <location>
        <begin position="358"/>
        <end position="360"/>
    </location>
</feature>
<feature type="helix" evidence="43">
    <location>
        <begin position="362"/>
        <end position="366"/>
    </location>
</feature>
<feature type="strand" evidence="44">
    <location>
        <begin position="373"/>
        <end position="376"/>
    </location>
</feature>
<feature type="helix" evidence="43">
    <location>
        <begin position="379"/>
        <end position="392"/>
    </location>
</feature>
<feature type="strand" evidence="43">
    <location>
        <begin position="396"/>
        <end position="405"/>
    </location>
</feature>
<feature type="strand" evidence="43">
    <location>
        <begin position="408"/>
        <end position="419"/>
    </location>
</feature>
<feature type="strand" evidence="51">
    <location>
        <begin position="427"/>
        <end position="433"/>
    </location>
</feature>
<feature type="turn" evidence="51">
    <location>
        <begin position="434"/>
        <end position="436"/>
    </location>
</feature>
<feature type="strand" evidence="51">
    <location>
        <begin position="437"/>
        <end position="446"/>
    </location>
</feature>
<feature type="helix" evidence="51">
    <location>
        <begin position="449"/>
        <end position="451"/>
    </location>
</feature>
<feature type="strand" evidence="51">
    <location>
        <begin position="455"/>
        <end position="462"/>
    </location>
</feature>
<feature type="strand" evidence="51">
    <location>
        <begin position="464"/>
        <end position="475"/>
    </location>
</feature>
<feature type="helix" evidence="53">
    <location>
        <begin position="476"/>
        <end position="478"/>
    </location>
</feature>
<feature type="turn" evidence="44">
    <location>
        <begin position="479"/>
        <end position="482"/>
    </location>
</feature>
<feature type="strand" evidence="51">
    <location>
        <begin position="484"/>
        <end position="495"/>
    </location>
</feature>
<feature type="helix" evidence="51">
    <location>
        <begin position="496"/>
        <end position="499"/>
    </location>
</feature>
<feature type="strand" evidence="56">
    <location>
        <begin position="501"/>
        <end position="503"/>
    </location>
</feature>
<feature type="strand" evidence="51">
    <location>
        <begin position="505"/>
        <end position="520"/>
    </location>
</feature>
<feature type="strand" evidence="51">
    <location>
        <begin position="523"/>
        <end position="537"/>
    </location>
</feature>
<feature type="helix" evidence="51">
    <location>
        <begin position="543"/>
        <end position="551"/>
    </location>
</feature>
<feature type="strand" evidence="50">
    <location>
        <begin position="558"/>
        <end position="560"/>
    </location>
</feature>
<feature type="strand" evidence="51">
    <location>
        <begin position="564"/>
        <end position="579"/>
    </location>
</feature>
<feature type="strand" evidence="51">
    <location>
        <begin position="584"/>
        <end position="586"/>
    </location>
</feature>
<feature type="strand" evidence="51">
    <location>
        <begin position="589"/>
        <end position="600"/>
    </location>
</feature>
<feature type="strand" evidence="54">
    <location>
        <begin position="604"/>
        <end position="606"/>
    </location>
</feature>
<feature type="strand" evidence="51">
    <location>
        <begin position="608"/>
        <end position="622"/>
    </location>
</feature>
<feature type="strand" evidence="51">
    <location>
        <begin position="627"/>
        <end position="641"/>
    </location>
</feature>
<feature type="strand" evidence="44">
    <location>
        <begin position="642"/>
        <end position="644"/>
    </location>
</feature>
<feature type="helix" evidence="51">
    <location>
        <begin position="648"/>
        <end position="650"/>
    </location>
</feature>
<feature type="turn" evidence="57">
    <location>
        <begin position="657"/>
        <end position="659"/>
    </location>
</feature>
<feature type="strand" evidence="51">
    <location>
        <begin position="671"/>
        <end position="674"/>
    </location>
</feature>
<feature type="strand" evidence="45">
    <location>
        <begin position="685"/>
        <end position="687"/>
    </location>
</feature>
<feature type="strand" evidence="47">
    <location>
        <begin position="689"/>
        <end position="691"/>
    </location>
</feature>
<feature type="helix" evidence="47">
    <location>
        <begin position="692"/>
        <end position="694"/>
    </location>
</feature>
<feature type="strand" evidence="51">
    <location>
        <begin position="700"/>
        <end position="705"/>
    </location>
</feature>
<feature type="strand" evidence="51">
    <location>
        <begin position="708"/>
        <end position="720"/>
    </location>
</feature>
<feature type="turn" evidence="52">
    <location>
        <begin position="723"/>
        <end position="725"/>
    </location>
</feature>
<feature type="turn" evidence="51">
    <location>
        <begin position="727"/>
        <end position="729"/>
    </location>
</feature>
<feature type="helix" evidence="51">
    <location>
        <begin position="730"/>
        <end position="732"/>
    </location>
</feature>
<feature type="strand" evidence="51">
    <location>
        <begin position="733"/>
        <end position="745"/>
    </location>
</feature>
<feature type="helix" evidence="51">
    <location>
        <begin position="751"/>
        <end position="753"/>
    </location>
</feature>
<feature type="strand" evidence="48">
    <location>
        <begin position="755"/>
        <end position="757"/>
    </location>
</feature>
<feature type="strand" evidence="51">
    <location>
        <begin position="767"/>
        <end position="778"/>
    </location>
</feature>
<feature type="strand" evidence="51">
    <location>
        <begin position="781"/>
        <end position="792"/>
    </location>
</feature>
<feature type="strand" evidence="51">
    <location>
        <begin position="802"/>
        <end position="806"/>
    </location>
</feature>
<accession>P0A940</accession>
<accession>P39170</accession>
<accession>P39181</accession>
<accession>P77465</accession>
<accession>Q548B8</accession>
<accession>Q8KR94</accession>
<accession>Q9R2E3</accession>
<dbReference type="EMBL" id="AF407013">
    <property type="protein sequence ID" value="AAL01379.1"/>
    <property type="molecule type" value="Genomic_DNA"/>
</dbReference>
<dbReference type="EMBL" id="AY035865">
    <property type="protein sequence ID" value="AAK64508.1"/>
    <property type="molecule type" value="Genomic_DNA"/>
</dbReference>
<dbReference type="EMBL" id="U70214">
    <property type="protein sequence ID" value="AAB08606.1"/>
    <property type="molecule type" value="Genomic_DNA"/>
</dbReference>
<dbReference type="EMBL" id="U00096">
    <property type="protein sequence ID" value="AAC73288.1"/>
    <property type="molecule type" value="Genomic_DNA"/>
</dbReference>
<dbReference type="EMBL" id="AP009048">
    <property type="protein sequence ID" value="BAA77852.2"/>
    <property type="molecule type" value="Genomic_DNA"/>
</dbReference>
<dbReference type="PIR" id="A64742">
    <property type="entry name" value="A64742"/>
</dbReference>
<dbReference type="RefSeq" id="NP_414719.1">
    <property type="nucleotide sequence ID" value="NC_000913.3"/>
</dbReference>
<dbReference type="RefSeq" id="WP_001240896.1">
    <property type="nucleotide sequence ID" value="NZ_STEB01000032.1"/>
</dbReference>
<dbReference type="PDB" id="2QCZ">
    <property type="method" value="X-ray"/>
    <property type="resolution" value="2.70 A"/>
    <property type="chains" value="A/B=21-351"/>
</dbReference>
<dbReference type="PDB" id="2QDF">
    <property type="method" value="X-ray"/>
    <property type="resolution" value="2.20 A"/>
    <property type="chains" value="A=21-351"/>
</dbReference>
<dbReference type="PDB" id="2V9H">
    <property type="method" value="NMR"/>
    <property type="chains" value="A=21-184"/>
</dbReference>
<dbReference type="PDB" id="3EFC">
    <property type="method" value="X-ray"/>
    <property type="resolution" value="3.30 A"/>
    <property type="chains" value="A=21-410"/>
</dbReference>
<dbReference type="PDB" id="3OG5">
    <property type="method" value="X-ray"/>
    <property type="resolution" value="2.69 A"/>
    <property type="chains" value="A/B=264-424"/>
</dbReference>
<dbReference type="PDB" id="3Q6B">
    <property type="method" value="X-ray"/>
    <property type="resolution" value="1.50 A"/>
    <property type="chains" value="A=266-420"/>
</dbReference>
<dbReference type="PDB" id="4C4V">
    <property type="method" value="X-ray"/>
    <property type="resolution" value="3.00 A"/>
    <property type="chains" value="A=347-810, B=344-810"/>
</dbReference>
<dbReference type="PDB" id="4N75">
    <property type="method" value="X-ray"/>
    <property type="resolution" value="2.60 A"/>
    <property type="chains" value="A/B=427-810"/>
</dbReference>
<dbReference type="PDB" id="4PK1">
    <property type="method" value="X-ray"/>
    <property type="resolution" value="3.10 A"/>
    <property type="chains" value="A=175-424"/>
</dbReference>
<dbReference type="PDB" id="4XGA">
    <property type="method" value="X-ray"/>
    <property type="resolution" value="2.15 A"/>
    <property type="chains" value="B=175-420"/>
</dbReference>
<dbReference type="PDB" id="5AYW">
    <property type="method" value="X-ray"/>
    <property type="resolution" value="3.56 A"/>
    <property type="chains" value="A=22-810"/>
</dbReference>
<dbReference type="PDB" id="5D0O">
    <property type="method" value="X-ray"/>
    <property type="resolution" value="2.90 A"/>
    <property type="chains" value="A=1-810"/>
</dbReference>
<dbReference type="PDB" id="5D0Q">
    <property type="method" value="X-ray"/>
    <property type="resolution" value="3.50 A"/>
    <property type="chains" value="A/F=1-810"/>
</dbReference>
<dbReference type="PDB" id="5EKQ">
    <property type="method" value="X-ray"/>
    <property type="resolution" value="3.39 A"/>
    <property type="chains" value="A=21-810"/>
</dbReference>
<dbReference type="PDB" id="5LJO">
    <property type="method" value="EM"/>
    <property type="resolution" value="4.90 A"/>
    <property type="chains" value="A=24-806"/>
</dbReference>
<dbReference type="PDB" id="6FSU">
    <property type="method" value="X-ray"/>
    <property type="resolution" value="2.60 A"/>
    <property type="chains" value="A/B=421-810"/>
</dbReference>
<dbReference type="PDB" id="6LYQ">
    <property type="method" value="X-ray"/>
    <property type="resolution" value="3.19 A"/>
    <property type="chains" value="A=1-810"/>
</dbReference>
<dbReference type="PDB" id="6LYR">
    <property type="method" value="X-ray"/>
    <property type="resolution" value="3.28 A"/>
    <property type="chains" value="A=1-810"/>
</dbReference>
<dbReference type="PDB" id="6LYS">
    <property type="method" value="X-ray"/>
    <property type="resolution" value="3.05 A"/>
    <property type="chains" value="A=1-810"/>
</dbReference>
<dbReference type="PDB" id="6LYU">
    <property type="method" value="EM"/>
    <property type="resolution" value="4.20 A"/>
    <property type="chains" value="A=1-810"/>
</dbReference>
<dbReference type="PDB" id="6QGW">
    <property type="method" value="X-ray"/>
    <property type="resolution" value="1.94 A"/>
    <property type="chains" value="A=421-810"/>
</dbReference>
<dbReference type="PDB" id="6QGX">
    <property type="method" value="X-ray"/>
    <property type="resolution" value="2.20 A"/>
    <property type="chains" value="A=421-810"/>
</dbReference>
<dbReference type="PDB" id="6QGY">
    <property type="method" value="X-ray"/>
    <property type="resolution" value="2.51 A"/>
    <property type="chains" value="A/C=421-810"/>
</dbReference>
<dbReference type="PDB" id="6SMX">
    <property type="method" value="EM"/>
    <property type="resolution" value="6.65 A"/>
    <property type="chains" value="A=24-806"/>
</dbReference>
<dbReference type="PDB" id="6SN0">
    <property type="method" value="EM"/>
    <property type="resolution" value="10.80 A"/>
    <property type="chains" value="A=24-806"/>
</dbReference>
<dbReference type="PDB" id="6SN2">
    <property type="method" value="EM"/>
    <property type="resolution" value="9.50 A"/>
    <property type="chains" value="A=24-806"/>
</dbReference>
<dbReference type="PDB" id="6SN3">
    <property type="method" value="EM"/>
    <property type="resolution" value="8.40 A"/>
    <property type="chains" value="A=24-806"/>
</dbReference>
<dbReference type="PDB" id="6SN4">
    <property type="method" value="EM"/>
    <property type="resolution" value="9.50 A"/>
    <property type="chains" value="A=24-806"/>
</dbReference>
<dbReference type="PDB" id="6SN5">
    <property type="method" value="EM"/>
    <property type="resolution" value="9.80 A"/>
    <property type="chains" value="A=24-806"/>
</dbReference>
<dbReference type="PDB" id="6SN7">
    <property type="method" value="EM"/>
    <property type="resolution" value="8.90 A"/>
    <property type="chains" value="A=24-806"/>
</dbReference>
<dbReference type="PDB" id="6SN8">
    <property type="method" value="EM"/>
    <property type="resolution" value="8.40 A"/>
    <property type="chains" value="A=24-806"/>
</dbReference>
<dbReference type="PDB" id="6SN9">
    <property type="method" value="EM"/>
    <property type="resolution" value="9.80 A"/>
    <property type="chains" value="A=24-806"/>
</dbReference>
<dbReference type="PDB" id="6SO7">
    <property type="method" value="EM"/>
    <property type="resolution" value="10.50 A"/>
    <property type="chains" value="A=24-806"/>
</dbReference>
<dbReference type="PDB" id="6SO8">
    <property type="method" value="EM"/>
    <property type="resolution" value="9.80 A"/>
    <property type="chains" value="A=24-806"/>
</dbReference>
<dbReference type="PDB" id="6SOA">
    <property type="method" value="EM"/>
    <property type="resolution" value="10.80 A"/>
    <property type="chains" value="A=24-806"/>
</dbReference>
<dbReference type="PDB" id="6SOB">
    <property type="method" value="EM"/>
    <property type="resolution" value="8.50 A"/>
    <property type="chains" value="A=24-806"/>
</dbReference>
<dbReference type="PDB" id="6SOC">
    <property type="method" value="EM"/>
    <property type="resolution" value="9.00 A"/>
    <property type="chains" value="A=24-806"/>
</dbReference>
<dbReference type="PDB" id="6SOG">
    <property type="method" value="EM"/>
    <property type="resolution" value="8.30 A"/>
    <property type="chains" value="A=24-806"/>
</dbReference>
<dbReference type="PDB" id="6SOH">
    <property type="method" value="EM"/>
    <property type="resolution" value="9.50 A"/>
    <property type="chains" value="A=24-806"/>
</dbReference>
<dbReference type="PDB" id="6SOJ">
    <property type="method" value="EM"/>
    <property type="resolution" value="10.40 A"/>
    <property type="chains" value="A=24-806"/>
</dbReference>
<dbReference type="PDB" id="6T1W">
    <property type="method" value="X-ray"/>
    <property type="resolution" value="3.79 A"/>
    <property type="chains" value="A/B=1-810"/>
</dbReference>
<dbReference type="PDB" id="6V05">
    <property type="method" value="EM"/>
    <property type="resolution" value="4.10 A"/>
    <property type="chains" value="A=1-810, F=1-810"/>
</dbReference>
<dbReference type="PDB" id="7BNQ">
    <property type="method" value="EM"/>
    <property type="resolution" value="4.10 A"/>
    <property type="chains" value="A=1-810"/>
</dbReference>
<dbReference type="PDB" id="7NBX">
    <property type="method" value="EM"/>
    <property type="resolution" value="4.80 A"/>
    <property type="chains" value="A=1-810"/>
</dbReference>
<dbReference type="PDB" id="7NCS">
    <property type="method" value="EM"/>
    <property type="resolution" value="7.10 A"/>
    <property type="chains" value="A=1-810"/>
</dbReference>
<dbReference type="PDB" id="7ND0">
    <property type="method" value="EM"/>
    <property type="resolution" value="5.20 A"/>
    <property type="chains" value="A=1-810"/>
</dbReference>
<dbReference type="PDB" id="7NRE">
    <property type="method" value="X-ray"/>
    <property type="resolution" value="2.30 A"/>
    <property type="chains" value="A=421-810"/>
</dbReference>
<dbReference type="PDB" id="7NRF">
    <property type="method" value="X-ray"/>
    <property type="resolution" value="2.20 A"/>
    <property type="chains" value="A=421-810"/>
</dbReference>
<dbReference type="PDB" id="7NRI">
    <property type="method" value="EM"/>
    <property type="resolution" value="3.03 A"/>
    <property type="chains" value="A=21-808"/>
</dbReference>
<dbReference type="PDB" id="7P1C">
    <property type="method" value="X-ray"/>
    <property type="resolution" value="2.50 A"/>
    <property type="chains" value="A=421-810"/>
</dbReference>
<dbReference type="PDB" id="7R1V">
    <property type="method" value="X-ray"/>
    <property type="resolution" value="2.50 A"/>
    <property type="chains" value="A=421-810"/>
</dbReference>
<dbReference type="PDB" id="7R1W">
    <property type="method" value="EM"/>
    <property type="resolution" value="3.60 A"/>
    <property type="chains" value="A=1-809"/>
</dbReference>
<dbReference type="PDB" id="7RI4">
    <property type="method" value="EM"/>
    <property type="resolution" value="3.40 A"/>
    <property type="chains" value="A=1-810"/>
</dbReference>
<dbReference type="PDB" id="7RI5">
    <property type="method" value="EM"/>
    <property type="resolution" value="4.00 A"/>
    <property type="chains" value="A=1-810"/>
</dbReference>
<dbReference type="PDB" id="7RI6">
    <property type="method" value="EM"/>
    <property type="resolution" value="5.90 A"/>
    <property type="chains" value="A=1-810"/>
</dbReference>
<dbReference type="PDB" id="7RI7">
    <property type="method" value="EM"/>
    <property type="resolution" value="8.00 A"/>
    <property type="chains" value="A=1-810"/>
</dbReference>
<dbReference type="PDB" id="7RI8">
    <property type="method" value="EM"/>
    <property type="resolution" value="7.50 A"/>
    <property type="chains" value="A=1-810"/>
</dbReference>
<dbReference type="PDB" id="7RI9">
    <property type="method" value="EM"/>
    <property type="resolution" value="6.90 A"/>
    <property type="chains" value="A=1-810"/>
</dbReference>
<dbReference type="PDB" id="7RJ5">
    <property type="method" value="EM"/>
    <property type="resolution" value="7.00 A"/>
    <property type="chains" value="A=1-810"/>
</dbReference>
<dbReference type="PDB" id="7TSZ">
    <property type="method" value="EM"/>
    <property type="resolution" value="4.50 A"/>
    <property type="chains" value="A=22-810"/>
</dbReference>
<dbReference type="PDB" id="7TT0">
    <property type="method" value="EM"/>
    <property type="resolution" value="4.30 A"/>
    <property type="chains" value="A=22-810"/>
</dbReference>
<dbReference type="PDB" id="7TT1">
    <property type="method" value="EM"/>
    <property type="resolution" value="4.30 A"/>
    <property type="chains" value="A=22-810"/>
</dbReference>
<dbReference type="PDB" id="7TT2">
    <property type="method" value="EM"/>
    <property type="resolution" value="4.20 A"/>
    <property type="chains" value="A=22-810"/>
</dbReference>
<dbReference type="PDB" id="7TT3">
    <property type="method" value="EM"/>
    <property type="resolution" value="4.30 A"/>
    <property type="chains" value="A=22-810"/>
</dbReference>
<dbReference type="PDB" id="7TT4">
    <property type="method" value="EM"/>
    <property type="resolution" value="4.20 A"/>
    <property type="chains" value="A=22-810"/>
</dbReference>
<dbReference type="PDB" id="7TT5">
    <property type="method" value="EM"/>
    <property type="resolution" value="4.30 A"/>
    <property type="chains" value="A=22-810"/>
</dbReference>
<dbReference type="PDB" id="7TT6">
    <property type="method" value="EM"/>
    <property type="resolution" value="4.30 A"/>
    <property type="chains" value="A=22-810"/>
</dbReference>
<dbReference type="PDB" id="7TT7">
    <property type="method" value="EM"/>
    <property type="resolution" value="4.80 A"/>
    <property type="chains" value="A=22-810"/>
</dbReference>
<dbReference type="PDB" id="7TTC">
    <property type="method" value="EM"/>
    <property type="resolution" value="3.60 A"/>
    <property type="chains" value="A=22-810"/>
</dbReference>
<dbReference type="PDB" id="7YE4">
    <property type="method" value="EM"/>
    <property type="resolution" value="3.40 A"/>
    <property type="chains" value="A=1-810"/>
</dbReference>
<dbReference type="PDB" id="7YE6">
    <property type="method" value="EM"/>
    <property type="resolution" value="3.40 A"/>
    <property type="chains" value="A=1-810"/>
</dbReference>
<dbReference type="PDB" id="8ADG">
    <property type="method" value="EM"/>
    <property type="resolution" value="3.00 A"/>
    <property type="chains" value="A=1-810"/>
</dbReference>
<dbReference type="PDB" id="8ADI">
    <property type="method" value="EM"/>
    <property type="resolution" value="3.40 A"/>
    <property type="chains" value="A=1-810"/>
</dbReference>
<dbReference type="PDB" id="8BNZ">
    <property type="method" value="EM"/>
    <property type="resolution" value="3.50 A"/>
    <property type="chains" value="A=1-810"/>
</dbReference>
<dbReference type="PDB" id="8BO2">
    <property type="method" value="EM"/>
    <property type="resolution" value="3.10 A"/>
    <property type="chains" value="A=24-810"/>
</dbReference>
<dbReference type="PDB" id="8BVQ">
    <property type="method" value="EM"/>
    <property type="resolution" value="3.30 A"/>
    <property type="chains" value="A=21-810"/>
</dbReference>
<dbReference type="PDB" id="8BWC">
    <property type="method" value="EM"/>
    <property type="resolution" value="3.50 A"/>
    <property type="chains" value="A=21-810"/>
</dbReference>
<dbReference type="PDB" id="8PZ1">
    <property type="method" value="EM"/>
    <property type="resolution" value="4.10 A"/>
    <property type="chains" value="A=21-810"/>
</dbReference>
<dbReference type="PDB" id="8PZ2">
    <property type="method" value="EM"/>
    <property type="resolution" value="4.20 A"/>
    <property type="chains" value="A=21-810"/>
</dbReference>
<dbReference type="PDB" id="8PZU">
    <property type="method" value="EM"/>
    <property type="resolution" value="3.50 A"/>
    <property type="chains" value="A=21-810"/>
</dbReference>
<dbReference type="PDB" id="8PZV">
    <property type="method" value="EM"/>
    <property type="resolution" value="2.90 A"/>
    <property type="chains" value="A=21-810"/>
</dbReference>
<dbReference type="PDB" id="8Q0G">
    <property type="method" value="EM"/>
    <property type="resolution" value="4.30 A"/>
    <property type="chains" value="A=21-810"/>
</dbReference>
<dbReference type="PDB" id="8QN4">
    <property type="method" value="EM"/>
    <property type="resolution" value="3.36 A"/>
    <property type="chains" value="A=1-810"/>
</dbReference>
<dbReference type="PDB" id="8QP5">
    <property type="method" value="EM"/>
    <property type="resolution" value="4.40 A"/>
    <property type="chains" value="A=21-810"/>
</dbReference>
<dbReference type="PDB" id="8QPU">
    <property type="method" value="EM"/>
    <property type="resolution" value="5.20 A"/>
    <property type="chains" value="A=21-810"/>
</dbReference>
<dbReference type="PDB" id="8QPV">
    <property type="method" value="EM"/>
    <property type="resolution" value="4.00 A"/>
    <property type="chains" value="A=21-810"/>
</dbReference>
<dbReference type="PDB" id="8QPW">
    <property type="method" value="EM"/>
    <property type="resolution" value="5.30 A"/>
    <property type="chains" value="A=21-810"/>
</dbReference>
<dbReference type="PDB" id="8SPR">
    <property type="method" value="EM"/>
    <property type="resolution" value="3.90 A"/>
    <property type="chains" value="A=24-810"/>
</dbReference>
<dbReference type="PDB" id="8SQA">
    <property type="method" value="EM"/>
    <property type="resolution" value="4.20 A"/>
    <property type="chains" value="A=25-810"/>
</dbReference>
<dbReference type="PDB" id="8SQB">
    <property type="method" value="EM"/>
    <property type="resolution" value="3.80 A"/>
    <property type="chains" value="A=25-810"/>
</dbReference>
<dbReference type="PDB" id="9CNW">
    <property type="method" value="EM"/>
    <property type="resolution" value="2.60 A"/>
    <property type="chains" value="A=1-810"/>
</dbReference>
<dbReference type="PDB" id="9CNX">
    <property type="method" value="EM"/>
    <property type="resolution" value="3.55 A"/>
    <property type="chains" value="A=1-810"/>
</dbReference>
<dbReference type="PDB" id="9CNY">
    <property type="method" value="EM"/>
    <property type="resolution" value="4.00 A"/>
    <property type="chains" value="A=1-810"/>
</dbReference>
<dbReference type="PDB" id="9CNZ">
    <property type="method" value="EM"/>
    <property type="resolution" value="3.10 A"/>
    <property type="chains" value="A=1-810"/>
</dbReference>
<dbReference type="PDB" id="9CO0">
    <property type="method" value="EM"/>
    <property type="resolution" value="3.30 A"/>
    <property type="chains" value="A=1-810"/>
</dbReference>
<dbReference type="PDB" id="9CO2">
    <property type="method" value="X-ray"/>
    <property type="resolution" value="2.75 A"/>
    <property type="chains" value="A/B/C/D=425-806"/>
</dbReference>
<dbReference type="PDB" id="9HE1">
    <property type="method" value="EM"/>
    <property type="resolution" value="3.00 A"/>
    <property type="chains" value="A=1-810"/>
</dbReference>
<dbReference type="PDBsum" id="2QCZ"/>
<dbReference type="PDBsum" id="2QDF"/>
<dbReference type="PDBsum" id="2V9H"/>
<dbReference type="PDBsum" id="3EFC"/>
<dbReference type="PDBsum" id="3OG5"/>
<dbReference type="PDBsum" id="3Q6B"/>
<dbReference type="PDBsum" id="4C4V"/>
<dbReference type="PDBsum" id="4N75"/>
<dbReference type="PDBsum" id="4PK1"/>
<dbReference type="PDBsum" id="4XGA"/>
<dbReference type="PDBsum" id="5AYW"/>
<dbReference type="PDBsum" id="5D0O"/>
<dbReference type="PDBsum" id="5D0Q"/>
<dbReference type="PDBsum" id="5EKQ"/>
<dbReference type="PDBsum" id="5LJO"/>
<dbReference type="PDBsum" id="6FSU"/>
<dbReference type="PDBsum" id="6LYQ"/>
<dbReference type="PDBsum" id="6LYR"/>
<dbReference type="PDBsum" id="6LYS"/>
<dbReference type="PDBsum" id="6LYU"/>
<dbReference type="PDBsum" id="6QGW"/>
<dbReference type="PDBsum" id="6QGX"/>
<dbReference type="PDBsum" id="6QGY"/>
<dbReference type="PDBsum" id="6SMX"/>
<dbReference type="PDBsum" id="6SN0"/>
<dbReference type="PDBsum" id="6SN2"/>
<dbReference type="PDBsum" id="6SN3"/>
<dbReference type="PDBsum" id="6SN4"/>
<dbReference type="PDBsum" id="6SN5"/>
<dbReference type="PDBsum" id="6SN7"/>
<dbReference type="PDBsum" id="6SN8"/>
<dbReference type="PDBsum" id="6SN9"/>
<dbReference type="PDBsum" id="6SO7"/>
<dbReference type="PDBsum" id="6SO8"/>
<dbReference type="PDBsum" id="6SOA"/>
<dbReference type="PDBsum" id="6SOB"/>
<dbReference type="PDBsum" id="6SOC"/>
<dbReference type="PDBsum" id="6SOG"/>
<dbReference type="PDBsum" id="6SOH"/>
<dbReference type="PDBsum" id="6SOJ"/>
<dbReference type="PDBsum" id="6T1W"/>
<dbReference type="PDBsum" id="6V05"/>
<dbReference type="PDBsum" id="7BNQ"/>
<dbReference type="PDBsum" id="7NBX"/>
<dbReference type="PDBsum" id="7NCS"/>
<dbReference type="PDBsum" id="7ND0"/>
<dbReference type="PDBsum" id="7NRE"/>
<dbReference type="PDBsum" id="7NRF"/>
<dbReference type="PDBsum" id="7NRI"/>
<dbReference type="PDBsum" id="7P1C"/>
<dbReference type="PDBsum" id="7R1V"/>
<dbReference type="PDBsum" id="7R1W"/>
<dbReference type="PDBsum" id="7RI4"/>
<dbReference type="PDBsum" id="7RI5"/>
<dbReference type="PDBsum" id="7RI6"/>
<dbReference type="PDBsum" id="7RI7"/>
<dbReference type="PDBsum" id="7RI8"/>
<dbReference type="PDBsum" id="7RI9"/>
<dbReference type="PDBsum" id="7RJ5"/>
<dbReference type="PDBsum" id="7TSZ"/>
<dbReference type="PDBsum" id="7TT0"/>
<dbReference type="PDBsum" id="7TT1"/>
<dbReference type="PDBsum" id="7TT2"/>
<dbReference type="PDBsum" id="7TT3"/>
<dbReference type="PDBsum" id="7TT4"/>
<dbReference type="PDBsum" id="7TT5"/>
<dbReference type="PDBsum" id="7TT6"/>
<dbReference type="PDBsum" id="7TT7"/>
<dbReference type="PDBsum" id="7TTC"/>
<dbReference type="PDBsum" id="7YE4"/>
<dbReference type="PDBsum" id="7YE6"/>
<dbReference type="PDBsum" id="8ADG"/>
<dbReference type="PDBsum" id="8ADI"/>
<dbReference type="PDBsum" id="8BNZ"/>
<dbReference type="PDBsum" id="8BO2"/>
<dbReference type="PDBsum" id="8BVQ"/>
<dbReference type="PDBsum" id="8BWC"/>
<dbReference type="PDBsum" id="8PZ1"/>
<dbReference type="PDBsum" id="8PZ2"/>
<dbReference type="PDBsum" id="8PZU"/>
<dbReference type="PDBsum" id="8PZV"/>
<dbReference type="PDBsum" id="8Q0G"/>
<dbReference type="PDBsum" id="8QN4"/>
<dbReference type="PDBsum" id="8QP5"/>
<dbReference type="PDBsum" id="8QPU"/>
<dbReference type="PDBsum" id="8QPV"/>
<dbReference type="PDBsum" id="8QPW"/>
<dbReference type="PDBsum" id="8SPR"/>
<dbReference type="PDBsum" id="8SQA"/>
<dbReference type="PDBsum" id="8SQB"/>
<dbReference type="PDBsum" id="9CNW"/>
<dbReference type="PDBsum" id="9CNX"/>
<dbReference type="PDBsum" id="9CNY"/>
<dbReference type="PDBsum" id="9CNZ"/>
<dbReference type="PDBsum" id="9CO0"/>
<dbReference type="PDBsum" id="9CO2"/>
<dbReference type="PDBsum" id="9HE1"/>
<dbReference type="EMDB" id="EMD-12232"/>
<dbReference type="EMDB" id="EMD-12262"/>
<dbReference type="EMDB" id="EMD-12263"/>
<dbReference type="EMDB" id="EMD-12271"/>
<dbReference type="EMDB" id="EMD-12272"/>
<dbReference type="EMDB" id="EMD-12546"/>
<dbReference type="EMDB" id="EMD-14242"/>
<dbReference type="EMDB" id="EMD-15362"/>
<dbReference type="EMDB" id="EMD-15363"/>
<dbReference type="EMDB" id="EMD-16137"/>
<dbReference type="EMDB" id="EMD-16268"/>
<dbReference type="EMDB" id="EMD-18034"/>
<dbReference type="EMDB" id="EMD-18035"/>
<dbReference type="EMDB" id="EMD-18045"/>
<dbReference type="EMDB" id="EMD-18053"/>
<dbReference type="EMDB" id="EMD-18507"/>
<dbReference type="EMDB" id="EMD-18543"/>
<dbReference type="EMDB" id="EMD-18562"/>
<dbReference type="EMDB" id="EMD-18563"/>
<dbReference type="EMDB" id="EMD-18564"/>
<dbReference type="EMDB" id="EMD-20969"/>
<dbReference type="EMDB" id="EMD-24473"/>
<dbReference type="EMDB" id="EMD-24474"/>
<dbReference type="EMDB" id="EMD-24475"/>
<dbReference type="EMDB" id="EMD-24476"/>
<dbReference type="EMDB" id="EMD-24477"/>
<dbReference type="EMDB" id="EMD-24478"/>
<dbReference type="EMDB" id="EMD-24481"/>
<dbReference type="EMDB" id="EMD-30018"/>
<dbReference type="EMDB" id="EMD-33763"/>
<dbReference type="EMDB" id="EMD-33765"/>
<dbReference type="EMDB" id="EMD-4061"/>
<dbReference type="EMDB" id="EMD-45764"/>
<dbReference type="EMDB" id="EMD-45765"/>
<dbReference type="EMDB" id="EMD-45766"/>
<dbReference type="EMDB" id="EMD-45767"/>
<dbReference type="EMDB" id="EMD-45768"/>
<dbReference type="EMDB" id="EMD-52074"/>
<dbReference type="SMR" id="P0A940"/>
<dbReference type="BioGRID" id="4259504">
    <property type="interactions" value="750"/>
</dbReference>
<dbReference type="ComplexPortal" id="CPX-1923">
    <property type="entry name" value="BAM complex"/>
</dbReference>
<dbReference type="DIP" id="DIP-36019N"/>
<dbReference type="FunCoup" id="P0A940">
    <property type="interactions" value="339"/>
</dbReference>
<dbReference type="IntAct" id="P0A940">
    <property type="interactions" value="14"/>
</dbReference>
<dbReference type="STRING" id="511145.b0177"/>
<dbReference type="CarbonylDB" id="P0A940"/>
<dbReference type="jPOST" id="P0A940"/>
<dbReference type="PaxDb" id="511145-b0177"/>
<dbReference type="EnsemblBacteria" id="AAC73288">
    <property type="protein sequence ID" value="AAC73288"/>
    <property type="gene ID" value="b0177"/>
</dbReference>
<dbReference type="GeneID" id="93777248"/>
<dbReference type="GeneID" id="944870"/>
<dbReference type="KEGG" id="ecj:JW0172"/>
<dbReference type="KEGG" id="eco:b0177"/>
<dbReference type="KEGG" id="ecoc:C3026_00810"/>
<dbReference type="PATRIC" id="fig|1411691.4.peg.2102"/>
<dbReference type="EchoBASE" id="EB2541"/>
<dbReference type="eggNOG" id="COG4775">
    <property type="taxonomic scope" value="Bacteria"/>
</dbReference>
<dbReference type="HOGENOM" id="CLU_007664_1_0_6"/>
<dbReference type="InParanoid" id="P0A940"/>
<dbReference type="OMA" id="TNPRIFD"/>
<dbReference type="OrthoDB" id="9803054at2"/>
<dbReference type="PhylomeDB" id="P0A940"/>
<dbReference type="BioCyc" id="EcoCyc:G6093-MONOMER"/>
<dbReference type="EvolutionaryTrace" id="P0A940"/>
<dbReference type="PRO" id="PR:P0A940"/>
<dbReference type="Proteomes" id="UP000000625">
    <property type="component" value="Chromosome"/>
</dbReference>
<dbReference type="GO" id="GO:1990063">
    <property type="term" value="C:Bam protein complex"/>
    <property type="evidence" value="ECO:0000314"/>
    <property type="project" value="EcoCyc"/>
</dbReference>
<dbReference type="GO" id="GO:0009279">
    <property type="term" value="C:cell outer membrane"/>
    <property type="evidence" value="ECO:0000314"/>
    <property type="project" value="EcoCyc"/>
</dbReference>
<dbReference type="GO" id="GO:0016020">
    <property type="term" value="C:membrane"/>
    <property type="evidence" value="ECO:0000314"/>
    <property type="project" value="ComplexPortal"/>
</dbReference>
<dbReference type="GO" id="GO:0007155">
    <property type="term" value="P:cell adhesion"/>
    <property type="evidence" value="ECO:0007669"/>
    <property type="project" value="UniProtKB-KW"/>
</dbReference>
<dbReference type="GO" id="GO:0043165">
    <property type="term" value="P:Gram-negative-bacterium-type cell outer membrane assembly"/>
    <property type="evidence" value="ECO:0000314"/>
    <property type="project" value="ComplexPortal"/>
</dbReference>
<dbReference type="GO" id="GO:0051205">
    <property type="term" value="P:protein insertion into membrane"/>
    <property type="evidence" value="ECO:0000314"/>
    <property type="project" value="ComplexPortal"/>
</dbReference>
<dbReference type="FunFam" id="2.40.160.50:FF:000001">
    <property type="entry name" value="Outer membrane protein assembly factor BamA"/>
    <property type="match status" value="1"/>
</dbReference>
<dbReference type="FunFam" id="3.10.20.310:FF:000001">
    <property type="entry name" value="Outer membrane protein assembly factor BamA"/>
    <property type="match status" value="1"/>
</dbReference>
<dbReference type="FunFam" id="3.10.20.310:FF:000002">
    <property type="entry name" value="Outer membrane protein assembly factor BamA"/>
    <property type="match status" value="1"/>
</dbReference>
<dbReference type="FunFam" id="3.10.20.310:FF:000003">
    <property type="entry name" value="Outer membrane protein assembly factor BamA"/>
    <property type="match status" value="1"/>
</dbReference>
<dbReference type="FunFam" id="3.10.20.310:FF:000004">
    <property type="entry name" value="Outer membrane protein assembly factor BamA"/>
    <property type="match status" value="1"/>
</dbReference>
<dbReference type="FunFam" id="3.10.20.310:FF:000005">
    <property type="entry name" value="Outer membrane protein assembly factor BamA"/>
    <property type="match status" value="1"/>
</dbReference>
<dbReference type="Gene3D" id="3.10.20.310">
    <property type="entry name" value="membrane protein fhac"/>
    <property type="match status" value="5"/>
</dbReference>
<dbReference type="Gene3D" id="2.40.160.50">
    <property type="entry name" value="membrane protein fhac: a member of the omp85/tpsb transporter family"/>
    <property type="match status" value="1"/>
</dbReference>
<dbReference type="HAMAP" id="MF_01430">
    <property type="entry name" value="OM_assembly_BamA"/>
    <property type="match status" value="1"/>
</dbReference>
<dbReference type="InterPro" id="IPR000184">
    <property type="entry name" value="Bac_surfAg_D15"/>
</dbReference>
<dbReference type="InterPro" id="IPR010827">
    <property type="entry name" value="BamA/TamA_POTRA"/>
</dbReference>
<dbReference type="InterPro" id="IPR039910">
    <property type="entry name" value="D15-like"/>
</dbReference>
<dbReference type="InterPro" id="IPR023707">
    <property type="entry name" value="OM_assembly_BamA"/>
</dbReference>
<dbReference type="InterPro" id="IPR034746">
    <property type="entry name" value="POTRA"/>
</dbReference>
<dbReference type="NCBIfam" id="TIGR03303">
    <property type="entry name" value="OM_YaeT"/>
    <property type="match status" value="1"/>
</dbReference>
<dbReference type="NCBIfam" id="NF008287">
    <property type="entry name" value="PRK11067.1"/>
    <property type="match status" value="1"/>
</dbReference>
<dbReference type="PANTHER" id="PTHR12815:SF23">
    <property type="entry name" value="OUTER MEMBRANE PROTEIN ASSEMBLY FACTOR BAMA"/>
    <property type="match status" value="1"/>
</dbReference>
<dbReference type="PANTHER" id="PTHR12815">
    <property type="entry name" value="SORTING AND ASSEMBLY MACHINERY SAMM50 PROTEIN FAMILY MEMBER"/>
    <property type="match status" value="1"/>
</dbReference>
<dbReference type="Pfam" id="PF01103">
    <property type="entry name" value="Omp85"/>
    <property type="match status" value="1"/>
</dbReference>
<dbReference type="Pfam" id="PF07244">
    <property type="entry name" value="POTRA"/>
    <property type="match status" value="4"/>
</dbReference>
<dbReference type="PIRSF" id="PIRSF006076">
    <property type="entry name" value="OM_assembly_OMP85"/>
    <property type="match status" value="1"/>
</dbReference>
<dbReference type="PROSITE" id="PS51779">
    <property type="entry name" value="POTRA"/>
    <property type="match status" value="5"/>
</dbReference>
<organism>
    <name type="scientific">Escherichia coli (strain K12)</name>
    <dbReference type="NCBI Taxonomy" id="83333"/>
    <lineage>
        <taxon>Bacteria</taxon>
        <taxon>Pseudomonadati</taxon>
        <taxon>Pseudomonadota</taxon>
        <taxon>Gammaproteobacteria</taxon>
        <taxon>Enterobacterales</taxon>
        <taxon>Enterobacteriaceae</taxon>
        <taxon>Escherichia</taxon>
    </lineage>
</organism>
<protein>
    <recommendedName>
        <fullName evidence="1">Outer membrane protein assembly factor BamA</fullName>
    </recommendedName>
    <alternativeName>
        <fullName>Omp85</fullName>
    </alternativeName>
</protein>
<proteinExistence type="evidence at protein level"/>
<evidence type="ECO:0000255" key="1">
    <source>
        <dbReference type="HAMAP-Rule" id="MF_01430"/>
    </source>
</evidence>
<evidence type="ECO:0000255" key="2">
    <source>
        <dbReference type="PROSITE-ProRule" id="PRU01115"/>
    </source>
</evidence>
<evidence type="ECO:0000269" key="3">
    <source>
    </source>
</evidence>
<evidence type="ECO:0000269" key="4">
    <source>
    </source>
</evidence>
<evidence type="ECO:0000269" key="5">
    <source>
    </source>
</evidence>
<evidence type="ECO:0000269" key="6">
    <source>
    </source>
</evidence>
<evidence type="ECO:0000269" key="7">
    <source>
    </source>
</evidence>
<evidence type="ECO:0000269" key="8">
    <source>
    </source>
</evidence>
<evidence type="ECO:0000269" key="9">
    <source>
    </source>
</evidence>
<evidence type="ECO:0000269" key="10">
    <source>
    </source>
</evidence>
<evidence type="ECO:0000269" key="11">
    <source>
    </source>
</evidence>
<evidence type="ECO:0000269" key="12">
    <source>
    </source>
</evidence>
<evidence type="ECO:0000269" key="13">
    <source>
    </source>
</evidence>
<evidence type="ECO:0000269" key="14">
    <source>
    </source>
</evidence>
<evidence type="ECO:0000269" key="15">
    <source>
    </source>
</evidence>
<evidence type="ECO:0000269" key="16">
    <source>
    </source>
</evidence>
<evidence type="ECO:0000269" key="17">
    <source>
    </source>
</evidence>
<evidence type="ECO:0000269" key="18">
    <source>
    </source>
</evidence>
<evidence type="ECO:0000269" key="19">
    <source>
    </source>
</evidence>
<evidence type="ECO:0000269" key="20">
    <source>
    </source>
</evidence>
<evidence type="ECO:0000269" key="21">
    <source>
    </source>
</evidence>
<evidence type="ECO:0000269" key="22">
    <source>
    </source>
</evidence>
<evidence type="ECO:0000269" key="23">
    <source>
    </source>
</evidence>
<evidence type="ECO:0000269" key="24">
    <source>
    </source>
</evidence>
<evidence type="ECO:0000269" key="25">
    <source>
    </source>
</evidence>
<evidence type="ECO:0000305" key="26"/>
<evidence type="ECO:0000305" key="27">
    <source>
    </source>
</evidence>
<evidence type="ECO:0007744" key="28">
    <source>
        <dbReference type="PDB" id="2QCZ"/>
    </source>
</evidence>
<evidence type="ECO:0007744" key="29">
    <source>
        <dbReference type="PDB" id="2QDF"/>
    </source>
</evidence>
<evidence type="ECO:0007744" key="30">
    <source>
        <dbReference type="PDB" id="2V9H"/>
    </source>
</evidence>
<evidence type="ECO:0007744" key="31">
    <source>
        <dbReference type="PDB" id="3EFC"/>
    </source>
</evidence>
<evidence type="ECO:0007744" key="32">
    <source>
        <dbReference type="PDB" id="3Q6B"/>
    </source>
</evidence>
<evidence type="ECO:0007744" key="33">
    <source>
        <dbReference type="PDB" id="4C4V"/>
    </source>
</evidence>
<evidence type="ECO:0007744" key="34">
    <source>
        <dbReference type="PDB" id="4N75"/>
    </source>
</evidence>
<evidence type="ECO:0007744" key="35">
    <source>
        <dbReference type="PDB" id="5AYW"/>
    </source>
</evidence>
<evidence type="ECO:0007744" key="36">
    <source>
        <dbReference type="PDB" id="5D0O"/>
    </source>
</evidence>
<evidence type="ECO:0007744" key="37">
    <source>
        <dbReference type="PDB" id="5D0Q"/>
    </source>
</evidence>
<evidence type="ECO:0007744" key="38">
    <source>
        <dbReference type="PDB" id="5EKQ"/>
    </source>
</evidence>
<evidence type="ECO:0007744" key="39">
    <source>
        <dbReference type="PDB" id="5LJO"/>
    </source>
</evidence>
<evidence type="ECO:0007829" key="40">
    <source>
        <dbReference type="PDB" id="2QCZ"/>
    </source>
</evidence>
<evidence type="ECO:0007829" key="41">
    <source>
        <dbReference type="PDB" id="2QDF"/>
    </source>
</evidence>
<evidence type="ECO:0007829" key="42">
    <source>
        <dbReference type="PDB" id="3EFC"/>
    </source>
</evidence>
<evidence type="ECO:0007829" key="43">
    <source>
        <dbReference type="PDB" id="3Q6B"/>
    </source>
</evidence>
<evidence type="ECO:0007829" key="44">
    <source>
        <dbReference type="PDB" id="4C4V"/>
    </source>
</evidence>
<evidence type="ECO:0007829" key="45">
    <source>
        <dbReference type="PDB" id="4N75"/>
    </source>
</evidence>
<evidence type="ECO:0007829" key="46">
    <source>
        <dbReference type="PDB" id="4XGA"/>
    </source>
</evidence>
<evidence type="ECO:0007829" key="47">
    <source>
        <dbReference type="PDB" id="5D0O"/>
    </source>
</evidence>
<evidence type="ECO:0007829" key="48">
    <source>
        <dbReference type="PDB" id="5EKQ"/>
    </source>
</evidence>
<evidence type="ECO:0007829" key="49">
    <source>
        <dbReference type="PDB" id="6LYQ"/>
    </source>
</evidence>
<evidence type="ECO:0007829" key="50">
    <source>
        <dbReference type="PDB" id="6LYS"/>
    </source>
</evidence>
<evidence type="ECO:0007829" key="51">
    <source>
        <dbReference type="PDB" id="6QGW"/>
    </source>
</evidence>
<evidence type="ECO:0007829" key="52">
    <source>
        <dbReference type="PDB" id="6QGX"/>
    </source>
</evidence>
<evidence type="ECO:0007829" key="53">
    <source>
        <dbReference type="PDB" id="6QGY"/>
    </source>
</evidence>
<evidence type="ECO:0007829" key="54">
    <source>
        <dbReference type="PDB" id="7NRF"/>
    </source>
</evidence>
<evidence type="ECO:0007829" key="55">
    <source>
        <dbReference type="PDB" id="7NRI"/>
    </source>
</evidence>
<evidence type="ECO:0007829" key="56">
    <source>
        <dbReference type="PDB" id="7P1C"/>
    </source>
</evidence>
<evidence type="ECO:0007829" key="57">
    <source>
        <dbReference type="PDB" id="8ADG"/>
    </source>
</evidence>
<name>BAMA_ECOLI</name>
<sequence length="810" mass="90553">MAMKKLLIASLLFSSATVYGAEGFVVKDIHFEGLQRVAVGAALLSMPVRTGDTVNDEDISNTIRALFATGNFEDVRVLRDGDTLLVQVKERPTIASITFSGNKSVKDDMLKQNLEASGVRVGESLDRTTIADIEKGLEDFYYSVGKYSASVKAVVTPLPRNRVDLKLVFQEGVSAEIQQINIVGNHAFTTDELISHFQLRDEVPWWNVVGDRKYQKQKLAGDLETLRSYYLDRGYARFNIDSTQVSLTPDKKGIYVTVNITEGDQYKLSGVEVSGNLAGHSAEIEQLTKIEPGELYNGTKVTKMEDDIKKLLGRYGYAYPRVQSMPEINDADKTVKLRVNVDAGNRFYVRKIRFEGNDTSKDAVLRREMRQMEGAWLGSDLVDQGKERLNRLGFFETVDTDTQRVPGSPDQVDVVYKVKERNTGSFNFGIGYGTESGVSFQAGVQQDNWLGTGYAVGINGTKNDYQTYAELSVTNPYFTVDGVSLGGRLFYNDFQADDADLSDYTNKSYGTDVTLGFPINEYNSLRAGLGYVHNSLSNMQPQVAMWRYLYSMGEHPSTSDQDNSFKTDDFTFNYGWTYNKLDRGYFPTDGSRVNLTGKVTIPGSDNEYYKVTLDTATYVPIDDDHKWVVLGRTRWGYGDGLGGKEMPFYENFYAGGSSTVRGFQSNTIGPKAVYFPHQASNYDPDYDYECATQDGAKDLCKSDDAVGGNAMAVASLEFITPTPFISDKYANSVRTSFFWDMGTVWDTNWDSSQYSGYPDYSDPSNIRMSAGIALQWMSPLGPLVFSYAQPFKKYDGDKAEQFQFNIGKTW</sequence>
<keyword id="KW-0002">3D-structure</keyword>
<keyword id="KW-0130">Cell adhesion</keyword>
<keyword id="KW-0998">Cell outer membrane</keyword>
<keyword id="KW-0903">Direct protein sequencing</keyword>
<keyword id="KW-0472">Membrane</keyword>
<keyword id="KW-1185">Reference proteome</keyword>
<keyword id="KW-0677">Repeat</keyword>
<keyword id="KW-0732">Signal</keyword>
<keyword id="KW-0812">Transmembrane</keyword>
<keyword id="KW-1134">Transmembrane beta strand</keyword>
<comment type="function">
    <text evidence="4 6 7 13 16 21 22 23 24">Part of the outer membrane protein assembly complex (Bam), which is involved in assembly and insertion of beta-barrel proteins into the outer membrane. Constitutes, with BamD, the core component of the assembly machinery. Efficient substrate folding and insertion into the outer membrane requires all 5 subunits (PubMed:20378773, PubMed:21823654, PubMed:27686148). A lateral gate may open between the first and last strands of the BamA beta-barrel that allows substrate to insert into the outer membrane; comparison of the structures of complete and nearly complete Bam complexes show there is considerable movement of all 5 proteins (PubMed:26744406, PubMed:26900875, PubMed:26901871, PubMed:27686148).</text>
</comment>
<comment type="function">
    <text evidence="11 17 18">(Microbial infection) Acts as a receptor for CdiA-EC93, the contact-dependent growth inhibition (CDI) effector of E.coli strain EC93; antibodies against extracellular epitopes decrease CDI. Its role in CDI is independent of the other Bam complex components (PubMed:18761695). Is not the receptor for CdiA from E.coli strain 536 / UPEC, which does not have the same mode of toxicity as CdiA from strain EC93; the decreased expression of bamA101 in some experiments decreases the level of outer membrane proteins in general (PubMed:23469034, PubMed:23882017). Susceptibility to CdiA-EC93 is dependent on E.coli BamA; replacing BamA with the gene from S.typhimurium LT2, E.cloacae ATCC 13047 or D.dadantii 3937 renders cells resistant to CdiA-EC93. Cells with BamA from another bacteria no longer form CdiA-EC93-induced aggregates with EC93 cells. A chimera in which E.cloacae extracellular loops 6 and 7 are replaced with loops 6 and 7 from E.coli is susceptible to CdiA-EC93 and to CdiA-CT from strain 536 / UPEC (PubMed:23882017).</text>
</comment>
<comment type="subunit">
    <text evidence="3 5 7 8 13 14 16 22 23 24">Part of the Bam complex, which is composed of the outer membrane protein BamA, and four lipoproteins BamB, BamC, BamD and BamE. BamA interacts directly with BamB and the BamCDE subcomplex. The Bam complex has the shape of a hat, with the BamA beta-barrel crown in the outer membrane and the periplasmic brim formed by the BamA POTRA domains and the 4 lipoproteins (PubMed:26744406, PubMed:26900875, PubMed:26901871, PubMed:27686148).</text>
</comment>
<comment type="interaction">
    <interactant intactId="EBI-907371">
        <id>P0A940</id>
    </interactant>
    <interactant intactId="EBI-907297">
        <id>P77774</id>
        <label>bamB</label>
    </interactant>
    <organismsDiffer>false</organismsDiffer>
    <experiments>23</experiments>
</comment>
<comment type="interaction">
    <interactant intactId="EBI-907371">
        <id>P0A940</id>
    </interactant>
    <interactant intactId="EBI-1128087">
        <id>P0AC02</id>
        <label>bamD</label>
    </interactant>
    <organismsDiffer>false</organismsDiffer>
    <experiments>26</experiments>
</comment>
<comment type="interaction">
    <interactant intactId="EBI-907371">
        <id>P0A940</id>
    </interactant>
    <interactant intactId="EBI-1114706">
        <id>P69411</id>
        <label>rcsF</label>
    </interactant>
    <organismsDiffer>false</organismsDiffer>
    <experiments>3</experiments>
</comment>
<comment type="subcellular location">
    <subcellularLocation>
        <location evidence="1 5 18 19 20 23 25">Cell outer membrane</location>
    </subcellularLocation>
</comment>
<comment type="domain">
    <text evidence="9 10 12 15 19 20 27">Contains 5 N-terminal periplasmic polypeptide transport-associated (POTRA) domains which interact with other subunits of the complex, may recruit substrates from the periplasm into the outer membrane and also act as a chaperone (PubMed:14559180, PubMed:17702946, PubMed:18430136, PubMed:19081063, PubMed:21795783). The C-terminal region forms a discontinuous 16-stranded beta-barrel transmembrane region. The central pore is ellipsoid, and probably closed by extracellular loop 6, perhaps with the aid of other loops (PubMed:24619089, PubMed:24914988).</text>
</comment>
<comment type="mass spectrometry" mass="88426.0" method="Electrospray" evidence="24"/>
<comment type="disruption phenotype">
    <text evidence="3 6 11 17">Deletion is lethal. Depletion results in the accumulation of incorrectly assembled outer membrane proteins, including TolC, OmpF, OmpC and OmpA (PubMed:15851030, PubMed:16102012). Decreased expression leads to decreased susceptibility to contact-dependent growth inhibition (CDI), and decreased expression of outer membrane proteins (including in this study LamB) as well as up-regulation of periplasmic protease DegP (PubMed:18761695, PubMed:23469034).</text>
</comment>
<comment type="similarity">
    <text evidence="1">Belongs to the BamA family.</text>
</comment>